<comment type="function">
    <text evidence="1 2">Regulates G protein-coupled receptor signaling cascades. Inhibits signal transduction by increasing the GTPase activity of G protein alpha subunits, thereby driving them into their inactive GDP-bound form (By similarity). It is involved in the negative regulation of the angiotensin-activated signaling pathway (By similarity). Plays a role in the regulation of blood pressure in response to signaling via G protein-coupled receptors and GNAQ. Plays a role in regulating the constriction and relaxation of vascular smooth muscle (By similarity). Binds EIF2B5 and blocks its activity, thereby inhibiting the translation of mRNA into protein (By similarity).</text>
</comment>
<comment type="subunit">
    <text evidence="2">Interacts with GNAQ. Does not interact with GNAI1 and GNAI3. Interacts with EIF2B5. Interacts with PRKG1 (isoform alpha).</text>
</comment>
<comment type="subcellular location">
    <subcellularLocation>
        <location evidence="2">Cell membrane</location>
    </subcellularLocation>
    <subcellularLocation>
        <location evidence="2">Cytoplasm</location>
    </subcellularLocation>
    <subcellularLocation>
        <location evidence="2">Nucleus</location>
        <location evidence="2">Nucleolus</location>
    </subcellularLocation>
</comment>
<comment type="PTM">
    <text evidence="2">Phosphorylated by protein kinase C. Phosphorylation by PRKG1 leads to activation of RGS2 activity.</text>
</comment>
<name>RGS2_PIG</name>
<feature type="chain" id="PRO_0000204180" description="Regulator of G-protein signaling 2">
    <location>
        <begin position="1"/>
        <end position="212"/>
    </location>
</feature>
<feature type="domain" description="RGS" evidence="3">
    <location>
        <begin position="83"/>
        <end position="199"/>
    </location>
</feature>
<feature type="region of interest" description="Disordered" evidence="4">
    <location>
        <begin position="11"/>
        <end position="33"/>
    </location>
</feature>
<feature type="region of interest" description="Necessary for membrane association" evidence="2">
    <location>
        <begin position="32"/>
        <end position="66"/>
    </location>
</feature>
<feature type="region of interest" description="Disordered" evidence="4">
    <location>
        <begin position="48"/>
        <end position="69"/>
    </location>
</feature>
<feature type="region of interest" description="Necessary to inhibit protein synthesis" evidence="2">
    <location>
        <begin position="79"/>
        <end position="116"/>
    </location>
</feature>
<feature type="sequence conflict" description="In Ref. 1; ABB89038." evidence="5" ref="1">
    <original>F</original>
    <variation>S</variation>
    <location>
        <position position="152"/>
    </location>
</feature>
<reference key="1">
    <citation type="submission" date="2005-11" db="EMBL/GenBank/DDBJ databases">
        <authorList>
            <person name="Yao W."/>
            <person name="Yang Z."/>
        </authorList>
    </citation>
    <scope>NUCLEOTIDE SEQUENCE [GENOMIC DNA]</scope>
</reference>
<reference key="2">
    <citation type="submission" date="2006-05" db="EMBL/GenBank/DDBJ databases">
        <authorList>
            <person name="Yao W."/>
        </authorList>
    </citation>
    <scope>NUCLEOTIDE SEQUENCE [MRNA]</scope>
</reference>
<gene>
    <name type="primary">RGS2</name>
</gene>
<protein>
    <recommendedName>
        <fullName>Regulator of G-protein signaling 2</fullName>
        <shortName>RGS2</shortName>
    </recommendedName>
</protein>
<sequence length="212" mass="24390">MQSAMFLTVHHDCGPMDKSAGTGPKSEEKREKMKRTLLKDWKTRLSYFLQNSSSPGKPKTGKKSKPQTFIKPSPEEAQLWAEAFDELLASKYGLAAFRAFLKSEFCEENIEFWLACEDFKKTKSPQKLSSKARKIYTDFIEKEAPKEINIDFQTKTLIAQNIQEATSGCFTTAQKRVYSLMENNSYPRFLESEFYQDLCRKPPQITTEPHAT</sequence>
<proteinExistence type="evidence at transcript level"/>
<accession>Q3S853</accession>
<accession>Q2V8V0</accession>
<organism>
    <name type="scientific">Sus scrofa</name>
    <name type="common">Pig</name>
    <dbReference type="NCBI Taxonomy" id="9823"/>
    <lineage>
        <taxon>Eukaryota</taxon>
        <taxon>Metazoa</taxon>
        <taxon>Chordata</taxon>
        <taxon>Craniata</taxon>
        <taxon>Vertebrata</taxon>
        <taxon>Euteleostomi</taxon>
        <taxon>Mammalia</taxon>
        <taxon>Eutheria</taxon>
        <taxon>Laurasiatheria</taxon>
        <taxon>Artiodactyla</taxon>
        <taxon>Suina</taxon>
        <taxon>Suidae</taxon>
        <taxon>Sus</taxon>
    </lineage>
</organism>
<evidence type="ECO:0000250" key="1">
    <source>
        <dbReference type="UniProtKB" id="O08849"/>
    </source>
</evidence>
<evidence type="ECO:0000250" key="2">
    <source>
        <dbReference type="UniProtKB" id="P41220"/>
    </source>
</evidence>
<evidence type="ECO:0000255" key="3">
    <source>
        <dbReference type="PROSITE-ProRule" id="PRU00171"/>
    </source>
</evidence>
<evidence type="ECO:0000256" key="4">
    <source>
        <dbReference type="SAM" id="MobiDB-lite"/>
    </source>
</evidence>
<evidence type="ECO:0000305" key="5"/>
<dbReference type="EMBL" id="DQ285660">
    <property type="protein sequence ID" value="ABB89038.1"/>
    <property type="molecule type" value="Genomic_DNA"/>
</dbReference>
<dbReference type="EMBL" id="DQ150111">
    <property type="protein sequence ID" value="AAZ94412.2"/>
    <property type="molecule type" value="mRNA"/>
</dbReference>
<dbReference type="RefSeq" id="NP_001038065.1">
    <property type="nucleotide sequence ID" value="NM_001044600.1"/>
</dbReference>
<dbReference type="SMR" id="Q3S853"/>
<dbReference type="FunCoup" id="Q3S853">
    <property type="interactions" value="492"/>
</dbReference>
<dbReference type="STRING" id="9823.ENSSSCP00000037031"/>
<dbReference type="PaxDb" id="9823-ENSSSCP00000011519"/>
<dbReference type="Ensembl" id="ENSSSCT00000042452.2">
    <property type="protein sequence ID" value="ENSSSCP00000037031.1"/>
    <property type="gene ID" value="ENSSSCG00000037241.2"/>
</dbReference>
<dbReference type="Ensembl" id="ENSSSCT00015095830.1">
    <property type="protein sequence ID" value="ENSSSCP00015039364.1"/>
    <property type="gene ID" value="ENSSSCG00015071331.1"/>
</dbReference>
<dbReference type="Ensembl" id="ENSSSCT00025025008.1">
    <property type="protein sequence ID" value="ENSSSCP00025010563.1"/>
    <property type="gene ID" value="ENSSSCG00025018435.1"/>
</dbReference>
<dbReference type="Ensembl" id="ENSSSCT00030007899.1">
    <property type="protein sequence ID" value="ENSSSCP00030003489.1"/>
    <property type="gene ID" value="ENSSSCG00030005819.1"/>
</dbReference>
<dbReference type="Ensembl" id="ENSSSCT00035083042.1">
    <property type="protein sequence ID" value="ENSSSCP00035034478.1"/>
    <property type="gene ID" value="ENSSSCG00035061803.1"/>
</dbReference>
<dbReference type="Ensembl" id="ENSSSCT00040080391.1">
    <property type="protein sequence ID" value="ENSSSCP00040034807.1"/>
    <property type="gene ID" value="ENSSSCG00040059147.1"/>
</dbReference>
<dbReference type="Ensembl" id="ENSSSCT00045042702.1">
    <property type="protein sequence ID" value="ENSSSCP00045029654.1"/>
    <property type="gene ID" value="ENSSSCG00045025061.1"/>
</dbReference>
<dbReference type="Ensembl" id="ENSSSCT00050081272.1">
    <property type="protein sequence ID" value="ENSSSCP00050034882.1"/>
    <property type="gene ID" value="ENSSSCG00050059659.1"/>
</dbReference>
<dbReference type="Ensembl" id="ENSSSCT00060086126.1">
    <property type="protein sequence ID" value="ENSSSCP00060037242.1"/>
    <property type="gene ID" value="ENSSSCG00060063124.1"/>
</dbReference>
<dbReference type="Ensembl" id="ENSSSCT00065075089.1">
    <property type="protein sequence ID" value="ENSSSCP00065032700.1"/>
    <property type="gene ID" value="ENSSSCG00065054828.1"/>
</dbReference>
<dbReference type="Ensembl" id="ENSSSCT00070023534.1">
    <property type="protein sequence ID" value="ENSSSCP00070019468.1"/>
    <property type="gene ID" value="ENSSSCG00070012071.1"/>
</dbReference>
<dbReference type="Ensembl" id="ENSSSCT00085021488">
    <property type="protein sequence ID" value="ENSSSCP00085014795"/>
    <property type="gene ID" value="ENSSSCG00085011496"/>
</dbReference>
<dbReference type="Ensembl" id="ENSSSCT00090000548">
    <property type="protein sequence ID" value="ENSSSCP00090000287"/>
    <property type="gene ID" value="ENSSSCG00090000364"/>
</dbReference>
<dbReference type="Ensembl" id="ENSSSCT00105040877">
    <property type="protein sequence ID" value="ENSSSCP00105028497"/>
    <property type="gene ID" value="ENSSSCG00105021416"/>
</dbReference>
<dbReference type="Ensembl" id="ENSSSCT00110030281">
    <property type="protein sequence ID" value="ENSSSCP00110020531"/>
    <property type="gene ID" value="ENSSSCG00110015876"/>
</dbReference>
<dbReference type="Ensembl" id="ENSSSCT00115024116">
    <property type="protein sequence ID" value="ENSSSCP00115022861"/>
    <property type="gene ID" value="ENSSSCG00115013906"/>
</dbReference>
<dbReference type="Ensembl" id="ENSSSCT00130005019">
    <property type="protein sequence ID" value="ENSSSCP00130003463"/>
    <property type="gene ID" value="ENSSSCG00130002612"/>
</dbReference>
<dbReference type="GeneID" id="733670"/>
<dbReference type="KEGG" id="ssc:733670"/>
<dbReference type="CTD" id="5997"/>
<dbReference type="VGNC" id="VGNC:96538">
    <property type="gene designation" value="RGS2"/>
</dbReference>
<dbReference type="eggNOG" id="KOG3589">
    <property type="taxonomic scope" value="Eukaryota"/>
</dbReference>
<dbReference type="GeneTree" id="ENSGT00940000157937"/>
<dbReference type="HOGENOM" id="CLU_059863_3_2_1"/>
<dbReference type="InParanoid" id="Q3S853"/>
<dbReference type="OMA" id="GRMKRTI"/>
<dbReference type="OrthoDB" id="196547at2759"/>
<dbReference type="TreeFam" id="TF315837"/>
<dbReference type="Reactome" id="R-SSC-416476">
    <property type="pathway name" value="G alpha (q) signalling events"/>
</dbReference>
<dbReference type="Proteomes" id="UP000008227">
    <property type="component" value="Chromosome 10"/>
</dbReference>
<dbReference type="Proteomes" id="UP000314985">
    <property type="component" value="Chromosome 10"/>
</dbReference>
<dbReference type="Proteomes" id="UP000694570">
    <property type="component" value="Unplaced"/>
</dbReference>
<dbReference type="Proteomes" id="UP000694571">
    <property type="component" value="Unplaced"/>
</dbReference>
<dbReference type="Proteomes" id="UP000694720">
    <property type="component" value="Unplaced"/>
</dbReference>
<dbReference type="Proteomes" id="UP000694722">
    <property type="component" value="Unplaced"/>
</dbReference>
<dbReference type="Proteomes" id="UP000694723">
    <property type="component" value="Unplaced"/>
</dbReference>
<dbReference type="Proteomes" id="UP000694724">
    <property type="component" value="Unplaced"/>
</dbReference>
<dbReference type="Proteomes" id="UP000694725">
    <property type="component" value="Unplaced"/>
</dbReference>
<dbReference type="Proteomes" id="UP000694726">
    <property type="component" value="Unplaced"/>
</dbReference>
<dbReference type="Proteomes" id="UP000694727">
    <property type="component" value="Unplaced"/>
</dbReference>
<dbReference type="Proteomes" id="UP000694728">
    <property type="component" value="Unplaced"/>
</dbReference>
<dbReference type="Bgee" id="ENSSSCG00000037241">
    <property type="expression patterns" value="Expressed in oocyte and 43 other cell types or tissues"/>
</dbReference>
<dbReference type="ExpressionAtlas" id="Q3S853">
    <property type="expression patterns" value="baseline and differential"/>
</dbReference>
<dbReference type="GO" id="GO:0005737">
    <property type="term" value="C:cytoplasm"/>
    <property type="evidence" value="ECO:0000250"/>
    <property type="project" value="UniProtKB"/>
</dbReference>
<dbReference type="GO" id="GO:0009898">
    <property type="term" value="C:cytoplasmic side of plasma membrane"/>
    <property type="evidence" value="ECO:0007669"/>
    <property type="project" value="Ensembl"/>
</dbReference>
<dbReference type="GO" id="GO:0005829">
    <property type="term" value="C:cytosol"/>
    <property type="evidence" value="ECO:0007669"/>
    <property type="project" value="Ensembl"/>
</dbReference>
<dbReference type="GO" id="GO:0005730">
    <property type="term" value="C:nucleolus"/>
    <property type="evidence" value="ECO:0007669"/>
    <property type="project" value="UniProtKB-SubCell"/>
</dbReference>
<dbReference type="GO" id="GO:0005634">
    <property type="term" value="C:nucleus"/>
    <property type="evidence" value="ECO:0000250"/>
    <property type="project" value="UniProtKB"/>
</dbReference>
<dbReference type="GO" id="GO:0005886">
    <property type="term" value="C:plasma membrane"/>
    <property type="evidence" value="ECO:0000250"/>
    <property type="project" value="UniProtKB"/>
</dbReference>
<dbReference type="GO" id="GO:0010855">
    <property type="term" value="F:adenylate cyclase inhibitor activity"/>
    <property type="evidence" value="ECO:0007669"/>
    <property type="project" value="Ensembl"/>
</dbReference>
<dbReference type="GO" id="GO:0001965">
    <property type="term" value="F:G-protein alpha-subunit binding"/>
    <property type="evidence" value="ECO:0007669"/>
    <property type="project" value="Ensembl"/>
</dbReference>
<dbReference type="GO" id="GO:0005096">
    <property type="term" value="F:GTPase activator activity"/>
    <property type="evidence" value="ECO:0000250"/>
    <property type="project" value="UniProtKB"/>
</dbReference>
<dbReference type="GO" id="GO:0050873">
    <property type="term" value="P:brown fat cell differentiation"/>
    <property type="evidence" value="ECO:0007669"/>
    <property type="project" value="Ensembl"/>
</dbReference>
<dbReference type="GO" id="GO:0010614">
    <property type="term" value="P:negative regulation of cardiac muscle hypertrophy"/>
    <property type="evidence" value="ECO:0007669"/>
    <property type="project" value="Ensembl"/>
</dbReference>
<dbReference type="GO" id="GO:0045744">
    <property type="term" value="P:negative regulation of G protein-coupled receptor signaling pathway"/>
    <property type="evidence" value="ECO:0007669"/>
    <property type="project" value="Ensembl"/>
</dbReference>
<dbReference type="GO" id="GO:0060452">
    <property type="term" value="P:positive regulation of cardiac muscle contraction"/>
    <property type="evidence" value="ECO:0007669"/>
    <property type="project" value="Ensembl"/>
</dbReference>
<dbReference type="GO" id="GO:0071877">
    <property type="term" value="P:regulation of adenylate cyclase-inhibiting adrenergic receptor signaling pathway"/>
    <property type="evidence" value="ECO:0007669"/>
    <property type="project" value="Ensembl"/>
</dbReference>
<dbReference type="GO" id="GO:0006417">
    <property type="term" value="P:regulation of translation"/>
    <property type="evidence" value="ECO:0007669"/>
    <property type="project" value="UniProtKB-KW"/>
</dbReference>
<dbReference type="GO" id="GO:0055119">
    <property type="term" value="P:relaxation of cardiac muscle"/>
    <property type="evidence" value="ECO:0007669"/>
    <property type="project" value="Ensembl"/>
</dbReference>
<dbReference type="GO" id="GO:0060087">
    <property type="term" value="P:relaxation of vascular associated smooth muscle"/>
    <property type="evidence" value="ECO:0007669"/>
    <property type="project" value="Ensembl"/>
</dbReference>
<dbReference type="GO" id="GO:0007283">
    <property type="term" value="P:spermatogenesis"/>
    <property type="evidence" value="ECO:0007669"/>
    <property type="project" value="Ensembl"/>
</dbReference>
<dbReference type="CDD" id="cd08709">
    <property type="entry name" value="RGS_RGS2"/>
    <property type="match status" value="1"/>
</dbReference>
<dbReference type="FunFam" id="1.10.167.10:FF:000001">
    <property type="entry name" value="Putative regulator of g-protein signaling 12"/>
    <property type="match status" value="1"/>
</dbReference>
<dbReference type="FunFam" id="1.10.196.10:FF:000001">
    <property type="entry name" value="Regulator of G-protein signaling 8"/>
    <property type="match status" value="1"/>
</dbReference>
<dbReference type="Gene3D" id="1.10.196.10">
    <property type="match status" value="1"/>
</dbReference>
<dbReference type="Gene3D" id="1.10.167.10">
    <property type="entry name" value="Regulator of G-protein Signalling 4, domain 2"/>
    <property type="match status" value="1"/>
</dbReference>
<dbReference type="InterPro" id="IPR016137">
    <property type="entry name" value="RGS"/>
</dbReference>
<dbReference type="InterPro" id="IPR034947">
    <property type="entry name" value="RGS2_RGS"/>
</dbReference>
<dbReference type="InterPro" id="IPR036305">
    <property type="entry name" value="RGS_sf"/>
</dbReference>
<dbReference type="InterPro" id="IPR024066">
    <property type="entry name" value="RGS_subdom1/3"/>
</dbReference>
<dbReference type="InterPro" id="IPR044926">
    <property type="entry name" value="RGS_subdomain_2"/>
</dbReference>
<dbReference type="PANTHER" id="PTHR10845">
    <property type="entry name" value="REGULATOR OF G PROTEIN SIGNALING"/>
    <property type="match status" value="1"/>
</dbReference>
<dbReference type="PANTHER" id="PTHR10845:SF43">
    <property type="entry name" value="REGULATOR OF G-PROTEIN SIGNALING 2"/>
    <property type="match status" value="1"/>
</dbReference>
<dbReference type="Pfam" id="PF00615">
    <property type="entry name" value="RGS"/>
    <property type="match status" value="1"/>
</dbReference>
<dbReference type="PRINTS" id="PR01301">
    <property type="entry name" value="RGSPROTEIN"/>
</dbReference>
<dbReference type="SMART" id="SM00315">
    <property type="entry name" value="RGS"/>
    <property type="match status" value="1"/>
</dbReference>
<dbReference type="SUPFAM" id="SSF48097">
    <property type="entry name" value="Regulator of G-protein signaling, RGS"/>
    <property type="match status" value="1"/>
</dbReference>
<dbReference type="PROSITE" id="PS50132">
    <property type="entry name" value="RGS"/>
    <property type="match status" value="1"/>
</dbReference>
<keyword id="KW-0131">Cell cycle</keyword>
<keyword id="KW-1003">Cell membrane</keyword>
<keyword id="KW-0963">Cytoplasm</keyword>
<keyword id="KW-0343">GTPase activation</keyword>
<keyword id="KW-0472">Membrane</keyword>
<keyword id="KW-0539">Nucleus</keyword>
<keyword id="KW-0597">Phosphoprotein</keyword>
<keyword id="KW-1185">Reference proteome</keyword>
<keyword id="KW-0734">Signal transduction inhibitor</keyword>
<keyword id="KW-0810">Translation regulation</keyword>